<organism>
    <name type="scientific">Burkholderia pseudomallei (strain K96243)</name>
    <dbReference type="NCBI Taxonomy" id="272560"/>
    <lineage>
        <taxon>Bacteria</taxon>
        <taxon>Pseudomonadati</taxon>
        <taxon>Pseudomonadota</taxon>
        <taxon>Betaproteobacteria</taxon>
        <taxon>Burkholderiales</taxon>
        <taxon>Burkholderiaceae</taxon>
        <taxon>Burkholderia</taxon>
        <taxon>pseudomallei group</taxon>
    </lineage>
</organism>
<gene>
    <name evidence="1" type="primary">nrdR</name>
    <name type="ordered locus">BPSL2757</name>
</gene>
<keyword id="KW-0067">ATP-binding</keyword>
<keyword id="KW-0238">DNA-binding</keyword>
<keyword id="KW-0479">Metal-binding</keyword>
<keyword id="KW-0547">Nucleotide-binding</keyword>
<keyword id="KW-1185">Reference proteome</keyword>
<keyword id="KW-0678">Repressor</keyword>
<keyword id="KW-0804">Transcription</keyword>
<keyword id="KW-0805">Transcription regulation</keyword>
<keyword id="KW-0862">Zinc</keyword>
<keyword id="KW-0863">Zinc-finger</keyword>
<proteinExistence type="inferred from homology"/>
<sequence length="159" mass="18427">MRCPFCRHDDTQVVDSRVSEDGAAIRRRRRCSACDKRFTTYERVELALPAVVKKDGSRTEFDRRKIVASMQLALRKRPVAADAIDAAVARIEYQLLASGEREVRSEKLGELVMNELRQLDTIAYVRFASVYRRFEDVSEFEDVIEEFRRAAPAKTPRKR</sequence>
<protein>
    <recommendedName>
        <fullName evidence="1">Transcriptional repressor NrdR</fullName>
    </recommendedName>
</protein>
<dbReference type="EMBL" id="BX571965">
    <property type="protein sequence ID" value="CAH36765.1"/>
    <property type="molecule type" value="Genomic_DNA"/>
</dbReference>
<dbReference type="RefSeq" id="WP_004185666.1">
    <property type="nucleotide sequence ID" value="NZ_CP009538.1"/>
</dbReference>
<dbReference type="RefSeq" id="YP_109353.1">
    <property type="nucleotide sequence ID" value="NC_006350.1"/>
</dbReference>
<dbReference type="SMR" id="Q63RB5"/>
<dbReference type="STRING" id="272560.BPSL2757"/>
<dbReference type="GeneID" id="93061344"/>
<dbReference type="KEGG" id="bps:BPSL2757"/>
<dbReference type="PATRIC" id="fig|272560.51.peg.2559"/>
<dbReference type="eggNOG" id="COG1327">
    <property type="taxonomic scope" value="Bacteria"/>
</dbReference>
<dbReference type="Proteomes" id="UP000000605">
    <property type="component" value="Chromosome 1"/>
</dbReference>
<dbReference type="GO" id="GO:0005524">
    <property type="term" value="F:ATP binding"/>
    <property type="evidence" value="ECO:0007669"/>
    <property type="project" value="UniProtKB-KW"/>
</dbReference>
<dbReference type="GO" id="GO:0003677">
    <property type="term" value="F:DNA binding"/>
    <property type="evidence" value="ECO:0007669"/>
    <property type="project" value="UniProtKB-KW"/>
</dbReference>
<dbReference type="GO" id="GO:0008270">
    <property type="term" value="F:zinc ion binding"/>
    <property type="evidence" value="ECO:0007669"/>
    <property type="project" value="UniProtKB-UniRule"/>
</dbReference>
<dbReference type="GO" id="GO:0045892">
    <property type="term" value="P:negative regulation of DNA-templated transcription"/>
    <property type="evidence" value="ECO:0007669"/>
    <property type="project" value="UniProtKB-UniRule"/>
</dbReference>
<dbReference type="HAMAP" id="MF_00440">
    <property type="entry name" value="NrdR"/>
    <property type="match status" value="1"/>
</dbReference>
<dbReference type="InterPro" id="IPR005144">
    <property type="entry name" value="ATP-cone_dom"/>
</dbReference>
<dbReference type="InterPro" id="IPR055173">
    <property type="entry name" value="NrdR-like_N"/>
</dbReference>
<dbReference type="InterPro" id="IPR003796">
    <property type="entry name" value="RNR_NrdR-like"/>
</dbReference>
<dbReference type="NCBIfam" id="TIGR00244">
    <property type="entry name" value="transcriptional regulator NrdR"/>
    <property type="match status" value="1"/>
</dbReference>
<dbReference type="PANTHER" id="PTHR30455">
    <property type="entry name" value="TRANSCRIPTIONAL REPRESSOR NRDR"/>
    <property type="match status" value="1"/>
</dbReference>
<dbReference type="PANTHER" id="PTHR30455:SF2">
    <property type="entry name" value="TRANSCRIPTIONAL REPRESSOR NRDR"/>
    <property type="match status" value="1"/>
</dbReference>
<dbReference type="Pfam" id="PF03477">
    <property type="entry name" value="ATP-cone"/>
    <property type="match status" value="1"/>
</dbReference>
<dbReference type="Pfam" id="PF22811">
    <property type="entry name" value="Zn_ribbon_NrdR"/>
    <property type="match status" value="1"/>
</dbReference>
<dbReference type="PROSITE" id="PS51161">
    <property type="entry name" value="ATP_CONE"/>
    <property type="match status" value="1"/>
</dbReference>
<comment type="function">
    <text evidence="1">Negatively regulates transcription of bacterial ribonucleotide reductase nrd genes and operons by binding to NrdR-boxes.</text>
</comment>
<comment type="cofactor">
    <cofactor evidence="1">
        <name>Zn(2+)</name>
        <dbReference type="ChEBI" id="CHEBI:29105"/>
    </cofactor>
    <text evidence="1">Binds 1 zinc ion.</text>
</comment>
<comment type="similarity">
    <text evidence="1">Belongs to the NrdR family.</text>
</comment>
<feature type="chain" id="PRO_0000182278" description="Transcriptional repressor NrdR">
    <location>
        <begin position="1"/>
        <end position="159"/>
    </location>
</feature>
<feature type="domain" description="ATP-cone" evidence="1">
    <location>
        <begin position="49"/>
        <end position="139"/>
    </location>
</feature>
<feature type="zinc finger region" evidence="1">
    <location>
        <begin position="3"/>
        <end position="34"/>
    </location>
</feature>
<reference key="1">
    <citation type="journal article" date="2004" name="Proc. Natl. Acad. Sci. U.S.A.">
        <title>Genomic plasticity of the causative agent of melioidosis, Burkholderia pseudomallei.</title>
        <authorList>
            <person name="Holden M.T.G."/>
            <person name="Titball R.W."/>
            <person name="Peacock S.J."/>
            <person name="Cerdeno-Tarraga A.-M."/>
            <person name="Atkins T."/>
            <person name="Crossman L.C."/>
            <person name="Pitt T."/>
            <person name="Churcher C."/>
            <person name="Mungall K.L."/>
            <person name="Bentley S.D."/>
            <person name="Sebaihia M."/>
            <person name="Thomson N.R."/>
            <person name="Bason N."/>
            <person name="Beacham I.R."/>
            <person name="Brooks K."/>
            <person name="Brown K.A."/>
            <person name="Brown N.F."/>
            <person name="Challis G.L."/>
            <person name="Cherevach I."/>
            <person name="Chillingworth T."/>
            <person name="Cronin A."/>
            <person name="Crossett B."/>
            <person name="Davis P."/>
            <person name="DeShazer D."/>
            <person name="Feltwell T."/>
            <person name="Fraser A."/>
            <person name="Hance Z."/>
            <person name="Hauser H."/>
            <person name="Holroyd S."/>
            <person name="Jagels K."/>
            <person name="Keith K.E."/>
            <person name="Maddison M."/>
            <person name="Moule S."/>
            <person name="Price C."/>
            <person name="Quail M.A."/>
            <person name="Rabbinowitsch E."/>
            <person name="Rutherford K."/>
            <person name="Sanders M."/>
            <person name="Simmonds M."/>
            <person name="Songsivilai S."/>
            <person name="Stevens K."/>
            <person name="Tumapa S."/>
            <person name="Vesaratchavest M."/>
            <person name="Whitehead S."/>
            <person name="Yeats C."/>
            <person name="Barrell B.G."/>
            <person name="Oyston P.C.F."/>
            <person name="Parkhill J."/>
        </authorList>
    </citation>
    <scope>NUCLEOTIDE SEQUENCE [LARGE SCALE GENOMIC DNA]</scope>
    <source>
        <strain>K96243</strain>
    </source>
</reference>
<evidence type="ECO:0000255" key="1">
    <source>
        <dbReference type="HAMAP-Rule" id="MF_00440"/>
    </source>
</evidence>
<name>NRDR_BURPS</name>
<accession>Q63RB5</accession>